<feature type="chain" id="PRO_0000102650" description="Ribosome-binding factor A">
    <location>
        <begin position="1"/>
        <end position="116"/>
    </location>
</feature>
<gene>
    <name evidence="1" type="primary">rbfA</name>
    <name type="ordered locus">CPE1685</name>
</gene>
<comment type="function">
    <text evidence="1">One of several proteins that assist in the late maturation steps of the functional core of the 30S ribosomal subunit. Associates with free 30S ribosomal subunits (but not with 30S subunits that are part of 70S ribosomes or polysomes). Required for efficient processing of 16S rRNA. May interact with the 5'-terminal helix region of 16S rRNA.</text>
</comment>
<comment type="subunit">
    <text evidence="1">Monomer. Binds 30S ribosomal subunits, but not 50S ribosomal subunits or 70S ribosomes.</text>
</comment>
<comment type="subcellular location">
    <subcellularLocation>
        <location evidence="1">Cytoplasm</location>
    </subcellularLocation>
</comment>
<comment type="similarity">
    <text evidence="1">Belongs to the RbfA family.</text>
</comment>
<proteinExistence type="inferred from homology"/>
<name>RBFA_CLOPE</name>
<sequence>MANFRGKRINEEVRKEVSDIIRNQIKDPRLTAMVSVTQVEVTKDLRYAKVFVSLFAKNDEEKEESLKALKSSAGFIRREVGNRVKLRSTPEILFEEDNSIDNAMYIESLLNKIKEK</sequence>
<evidence type="ECO:0000255" key="1">
    <source>
        <dbReference type="HAMAP-Rule" id="MF_00003"/>
    </source>
</evidence>
<reference key="1">
    <citation type="journal article" date="2002" name="Proc. Natl. Acad. Sci. U.S.A.">
        <title>Complete genome sequence of Clostridium perfringens, an anaerobic flesh-eater.</title>
        <authorList>
            <person name="Shimizu T."/>
            <person name="Ohtani K."/>
            <person name="Hirakawa H."/>
            <person name="Ohshima K."/>
            <person name="Yamashita A."/>
            <person name="Shiba T."/>
            <person name="Ogasawara N."/>
            <person name="Hattori M."/>
            <person name="Kuhara S."/>
            <person name="Hayashi H."/>
        </authorList>
    </citation>
    <scope>NUCLEOTIDE SEQUENCE [LARGE SCALE GENOMIC DNA]</scope>
    <source>
        <strain>13 / Type A</strain>
    </source>
</reference>
<accession>Q8XJR9</accession>
<dbReference type="EMBL" id="BA000016">
    <property type="protein sequence ID" value="BAB81391.1"/>
    <property type="molecule type" value="Genomic_DNA"/>
</dbReference>
<dbReference type="RefSeq" id="WP_003449473.1">
    <property type="nucleotide sequence ID" value="NC_003366.1"/>
</dbReference>
<dbReference type="SMR" id="Q8XJR9"/>
<dbReference type="STRING" id="195102.gene:10490949"/>
<dbReference type="GeneID" id="93001777"/>
<dbReference type="KEGG" id="cpe:CPE1685"/>
<dbReference type="HOGENOM" id="CLU_089475_6_3_9"/>
<dbReference type="Proteomes" id="UP000000818">
    <property type="component" value="Chromosome"/>
</dbReference>
<dbReference type="GO" id="GO:0005829">
    <property type="term" value="C:cytosol"/>
    <property type="evidence" value="ECO:0007669"/>
    <property type="project" value="TreeGrafter"/>
</dbReference>
<dbReference type="GO" id="GO:0043024">
    <property type="term" value="F:ribosomal small subunit binding"/>
    <property type="evidence" value="ECO:0007669"/>
    <property type="project" value="TreeGrafter"/>
</dbReference>
<dbReference type="GO" id="GO:0030490">
    <property type="term" value="P:maturation of SSU-rRNA"/>
    <property type="evidence" value="ECO:0007669"/>
    <property type="project" value="UniProtKB-UniRule"/>
</dbReference>
<dbReference type="Gene3D" id="3.30.300.20">
    <property type="match status" value="1"/>
</dbReference>
<dbReference type="HAMAP" id="MF_00003">
    <property type="entry name" value="RbfA"/>
    <property type="match status" value="1"/>
</dbReference>
<dbReference type="InterPro" id="IPR015946">
    <property type="entry name" value="KH_dom-like_a/b"/>
</dbReference>
<dbReference type="InterPro" id="IPR000238">
    <property type="entry name" value="RbfA"/>
</dbReference>
<dbReference type="InterPro" id="IPR023799">
    <property type="entry name" value="RbfA_dom_sf"/>
</dbReference>
<dbReference type="InterPro" id="IPR020053">
    <property type="entry name" value="Ribosome-bd_factorA_CS"/>
</dbReference>
<dbReference type="NCBIfam" id="TIGR00082">
    <property type="entry name" value="rbfA"/>
    <property type="match status" value="1"/>
</dbReference>
<dbReference type="PANTHER" id="PTHR33515">
    <property type="entry name" value="RIBOSOME-BINDING FACTOR A, CHLOROPLASTIC-RELATED"/>
    <property type="match status" value="1"/>
</dbReference>
<dbReference type="PANTHER" id="PTHR33515:SF1">
    <property type="entry name" value="RIBOSOME-BINDING FACTOR A, CHLOROPLASTIC-RELATED"/>
    <property type="match status" value="1"/>
</dbReference>
<dbReference type="Pfam" id="PF02033">
    <property type="entry name" value="RBFA"/>
    <property type="match status" value="1"/>
</dbReference>
<dbReference type="SUPFAM" id="SSF89919">
    <property type="entry name" value="Ribosome-binding factor A, RbfA"/>
    <property type="match status" value="1"/>
</dbReference>
<dbReference type="PROSITE" id="PS01319">
    <property type="entry name" value="RBFA"/>
    <property type="match status" value="1"/>
</dbReference>
<keyword id="KW-0963">Cytoplasm</keyword>
<keyword id="KW-1185">Reference proteome</keyword>
<keyword id="KW-0690">Ribosome biogenesis</keyword>
<protein>
    <recommendedName>
        <fullName evidence="1">Ribosome-binding factor A</fullName>
    </recommendedName>
</protein>
<organism>
    <name type="scientific">Clostridium perfringens (strain 13 / Type A)</name>
    <dbReference type="NCBI Taxonomy" id="195102"/>
    <lineage>
        <taxon>Bacteria</taxon>
        <taxon>Bacillati</taxon>
        <taxon>Bacillota</taxon>
        <taxon>Clostridia</taxon>
        <taxon>Eubacteriales</taxon>
        <taxon>Clostridiaceae</taxon>
        <taxon>Clostridium</taxon>
    </lineage>
</organism>